<evidence type="ECO:0000255" key="1">
    <source>
        <dbReference type="HAMAP-Rule" id="MF_01646"/>
    </source>
</evidence>
<organism>
    <name type="scientific">Escherichia coli (strain K12 / DH10B)</name>
    <dbReference type="NCBI Taxonomy" id="316385"/>
    <lineage>
        <taxon>Bacteria</taxon>
        <taxon>Pseudomonadati</taxon>
        <taxon>Pseudomonadota</taxon>
        <taxon>Gammaproteobacteria</taxon>
        <taxon>Enterobacterales</taxon>
        <taxon>Enterobacteriaceae</taxon>
        <taxon>Escherichia</taxon>
    </lineage>
</organism>
<reference key="1">
    <citation type="journal article" date="2008" name="J. Bacteriol.">
        <title>The complete genome sequence of Escherichia coli DH10B: insights into the biology of a laboratory workhorse.</title>
        <authorList>
            <person name="Durfee T."/>
            <person name="Nelson R."/>
            <person name="Baldwin S."/>
            <person name="Plunkett G. III"/>
            <person name="Burland V."/>
            <person name="Mau B."/>
            <person name="Petrosino J.F."/>
            <person name="Qin X."/>
            <person name="Muzny D.M."/>
            <person name="Ayele M."/>
            <person name="Gibbs R.A."/>
            <person name="Csorgo B."/>
            <person name="Posfai G."/>
            <person name="Weinstock G.M."/>
            <person name="Blattner F.R."/>
        </authorList>
    </citation>
    <scope>NUCLEOTIDE SEQUENCE [LARGE SCALE GENOMIC DNA]</scope>
    <source>
        <strain>K12 / DH10B</strain>
    </source>
</reference>
<protein>
    <recommendedName>
        <fullName evidence="1">Siroheme synthase</fullName>
    </recommendedName>
    <domain>
        <recommendedName>
            <fullName evidence="1">Uroporphyrinogen-III C-methyltransferase</fullName>
            <shortName evidence="1">Urogen III methylase</shortName>
            <ecNumber evidence="1">2.1.1.107</ecNumber>
        </recommendedName>
        <alternativeName>
            <fullName evidence="1">SUMT</fullName>
        </alternativeName>
        <alternativeName>
            <fullName evidence="1">Uroporphyrinogen III methylase</fullName>
            <shortName evidence="1">UROM</shortName>
        </alternativeName>
    </domain>
    <domain>
        <recommendedName>
            <fullName evidence="1">Precorrin-2 dehydrogenase</fullName>
            <ecNumber evidence="1">1.3.1.76</ecNumber>
        </recommendedName>
    </domain>
    <domain>
        <recommendedName>
            <fullName evidence="1">Sirohydrochlorin ferrochelatase</fullName>
            <ecNumber evidence="1">4.99.1.4</ecNumber>
        </recommendedName>
    </domain>
</protein>
<sequence length="457" mass="49951">MDHLPIFCQLRDRDCLIVGGGDVAERKARLLLDAGARLTVNALAFIPQFTAWADAGMLTLVEGPFDESLLDTCWLAIAATDDDALNQRVSEAAEARRIFCNVVDAPKAASFIMPSIIDRSPLMVAVSSGGTSPVLARLLREKLESLLPLHLGQVAKYAGQLRGRVKQQFATMGERRRFWEKLFVNDRLAQSLANNDQKAITETTEQLINEPLDHRGEVVLVGAGPGDAGLLTLKGLQQIQQADVVVYDRLVSDDIMNLVRRDADRVFVGKRAGYHCVPQEEINQILLREAQKGKRVVRLKGGDPFIFGRGGEELETLCNAGIPFSVVPGITAASGCSAYSGIPLTHRDYAQSVRLITGHLKTGGELDWENLAAEKQTLVFYMGLNQAATIQQKLIEHGMPGEMPVAIVENGTAVTQRVIDGTLTQLGELAQQMNSPSLIIIGRVVGLRDKLNWFSNH</sequence>
<name>CYSG_ECODH</name>
<dbReference type="EC" id="2.1.1.107" evidence="1"/>
<dbReference type="EC" id="1.3.1.76" evidence="1"/>
<dbReference type="EC" id="4.99.1.4" evidence="1"/>
<dbReference type="EMBL" id="CP000948">
    <property type="protein sequence ID" value="ACB04428.1"/>
    <property type="molecule type" value="Genomic_DNA"/>
</dbReference>
<dbReference type="RefSeq" id="WP_000349855.1">
    <property type="nucleotide sequence ID" value="NC_010473.1"/>
</dbReference>
<dbReference type="SMR" id="B1X716"/>
<dbReference type="GeneID" id="75173526"/>
<dbReference type="KEGG" id="ecd:ECDH10B_3544"/>
<dbReference type="HOGENOM" id="CLU_011276_2_0_6"/>
<dbReference type="UniPathway" id="UPA00148">
    <property type="reaction ID" value="UER00211"/>
</dbReference>
<dbReference type="UniPathway" id="UPA00148">
    <property type="reaction ID" value="UER00222"/>
</dbReference>
<dbReference type="UniPathway" id="UPA00262">
    <property type="reaction ID" value="UER00211"/>
</dbReference>
<dbReference type="UniPathway" id="UPA00262">
    <property type="reaction ID" value="UER00222"/>
</dbReference>
<dbReference type="UniPathway" id="UPA00262">
    <property type="reaction ID" value="UER00376"/>
</dbReference>
<dbReference type="GO" id="GO:0051287">
    <property type="term" value="F:NAD binding"/>
    <property type="evidence" value="ECO:0007669"/>
    <property type="project" value="InterPro"/>
</dbReference>
<dbReference type="GO" id="GO:0043115">
    <property type="term" value="F:precorrin-2 dehydrogenase activity"/>
    <property type="evidence" value="ECO:0007669"/>
    <property type="project" value="UniProtKB-UniRule"/>
</dbReference>
<dbReference type="GO" id="GO:0051266">
    <property type="term" value="F:sirohydrochlorin ferrochelatase activity"/>
    <property type="evidence" value="ECO:0007669"/>
    <property type="project" value="UniProtKB-EC"/>
</dbReference>
<dbReference type="GO" id="GO:0004851">
    <property type="term" value="F:uroporphyrin-III C-methyltransferase activity"/>
    <property type="evidence" value="ECO:0007669"/>
    <property type="project" value="UniProtKB-UniRule"/>
</dbReference>
<dbReference type="GO" id="GO:0009236">
    <property type="term" value="P:cobalamin biosynthetic process"/>
    <property type="evidence" value="ECO:0007669"/>
    <property type="project" value="UniProtKB-UniRule"/>
</dbReference>
<dbReference type="GO" id="GO:0032259">
    <property type="term" value="P:methylation"/>
    <property type="evidence" value="ECO:0007669"/>
    <property type="project" value="UniProtKB-KW"/>
</dbReference>
<dbReference type="GO" id="GO:0019354">
    <property type="term" value="P:siroheme biosynthetic process"/>
    <property type="evidence" value="ECO:0007669"/>
    <property type="project" value="UniProtKB-UniRule"/>
</dbReference>
<dbReference type="CDD" id="cd11642">
    <property type="entry name" value="SUMT"/>
    <property type="match status" value="1"/>
</dbReference>
<dbReference type="FunFam" id="1.10.8.210:FF:000001">
    <property type="entry name" value="Siroheme synthase"/>
    <property type="match status" value="1"/>
</dbReference>
<dbReference type="FunFam" id="3.30.160.110:FF:000001">
    <property type="entry name" value="Siroheme synthase"/>
    <property type="match status" value="1"/>
</dbReference>
<dbReference type="FunFam" id="3.30.950.10:FF:000001">
    <property type="entry name" value="Siroheme synthase"/>
    <property type="match status" value="1"/>
</dbReference>
<dbReference type="FunFam" id="3.40.1010.10:FF:000001">
    <property type="entry name" value="Siroheme synthase"/>
    <property type="match status" value="1"/>
</dbReference>
<dbReference type="FunFam" id="3.40.50.720:FF:000092">
    <property type="entry name" value="Siroheme synthase"/>
    <property type="match status" value="1"/>
</dbReference>
<dbReference type="Gene3D" id="3.40.1010.10">
    <property type="entry name" value="Cobalt-precorrin-4 Transmethylase, Domain 1"/>
    <property type="match status" value="1"/>
</dbReference>
<dbReference type="Gene3D" id="3.30.950.10">
    <property type="entry name" value="Methyltransferase, Cobalt-precorrin-4 Transmethylase, Domain 2"/>
    <property type="match status" value="1"/>
</dbReference>
<dbReference type="Gene3D" id="3.40.50.720">
    <property type="entry name" value="NAD(P)-binding Rossmann-like Domain"/>
    <property type="match status" value="1"/>
</dbReference>
<dbReference type="Gene3D" id="1.10.8.210">
    <property type="entry name" value="Sirohaem synthase, dimerisation domain"/>
    <property type="match status" value="1"/>
</dbReference>
<dbReference type="Gene3D" id="3.30.160.110">
    <property type="entry name" value="Siroheme synthase, domain 2"/>
    <property type="match status" value="1"/>
</dbReference>
<dbReference type="HAMAP" id="MF_01646">
    <property type="entry name" value="Siroheme_synth"/>
    <property type="match status" value="1"/>
</dbReference>
<dbReference type="InterPro" id="IPR000878">
    <property type="entry name" value="4pyrrol_Mease"/>
</dbReference>
<dbReference type="InterPro" id="IPR035996">
    <property type="entry name" value="4pyrrol_Methylase_sf"/>
</dbReference>
<dbReference type="InterPro" id="IPR014777">
    <property type="entry name" value="4pyrrole_Mease_sub1"/>
</dbReference>
<dbReference type="InterPro" id="IPR014776">
    <property type="entry name" value="4pyrrole_Mease_sub2"/>
</dbReference>
<dbReference type="InterPro" id="IPR006366">
    <property type="entry name" value="CobA/CysG_C"/>
</dbReference>
<dbReference type="InterPro" id="IPR036291">
    <property type="entry name" value="NAD(P)-bd_dom_sf"/>
</dbReference>
<dbReference type="InterPro" id="IPR050161">
    <property type="entry name" value="Siro_Cobalamin_biosynth"/>
</dbReference>
<dbReference type="InterPro" id="IPR037115">
    <property type="entry name" value="Sirohaem_synt_dimer_dom_sf"/>
</dbReference>
<dbReference type="InterPro" id="IPR012409">
    <property type="entry name" value="Sirohaem_synth"/>
</dbReference>
<dbReference type="InterPro" id="IPR028281">
    <property type="entry name" value="Sirohaem_synthase_central"/>
</dbReference>
<dbReference type="InterPro" id="IPR019478">
    <property type="entry name" value="Sirohaem_synthase_dimer_dom"/>
</dbReference>
<dbReference type="InterPro" id="IPR006367">
    <property type="entry name" value="Sirohaem_synthase_N"/>
</dbReference>
<dbReference type="InterPro" id="IPR003043">
    <property type="entry name" value="Uropor_MeTrfase_CS"/>
</dbReference>
<dbReference type="NCBIfam" id="TIGR01469">
    <property type="entry name" value="cobA_cysG_Cterm"/>
    <property type="match status" value="1"/>
</dbReference>
<dbReference type="NCBIfam" id="TIGR01470">
    <property type="entry name" value="cysG_Nterm"/>
    <property type="match status" value="1"/>
</dbReference>
<dbReference type="NCBIfam" id="NF004790">
    <property type="entry name" value="PRK06136.1"/>
    <property type="match status" value="1"/>
</dbReference>
<dbReference type="NCBIfam" id="NF007922">
    <property type="entry name" value="PRK10637.1"/>
    <property type="match status" value="1"/>
</dbReference>
<dbReference type="PANTHER" id="PTHR45790:SF1">
    <property type="entry name" value="SIROHEME SYNTHASE"/>
    <property type="match status" value="1"/>
</dbReference>
<dbReference type="PANTHER" id="PTHR45790">
    <property type="entry name" value="SIROHEME SYNTHASE-RELATED"/>
    <property type="match status" value="1"/>
</dbReference>
<dbReference type="Pfam" id="PF10414">
    <property type="entry name" value="CysG_dimeriser"/>
    <property type="match status" value="1"/>
</dbReference>
<dbReference type="Pfam" id="PF13241">
    <property type="entry name" value="NAD_binding_7"/>
    <property type="match status" value="1"/>
</dbReference>
<dbReference type="Pfam" id="PF14824">
    <property type="entry name" value="Sirohm_synth_M"/>
    <property type="match status" value="1"/>
</dbReference>
<dbReference type="Pfam" id="PF00590">
    <property type="entry name" value="TP_methylase"/>
    <property type="match status" value="1"/>
</dbReference>
<dbReference type="PIRSF" id="PIRSF036426">
    <property type="entry name" value="Sirohaem_synth"/>
    <property type="match status" value="1"/>
</dbReference>
<dbReference type="SUPFAM" id="SSF51735">
    <property type="entry name" value="NAD(P)-binding Rossmann-fold domains"/>
    <property type="match status" value="1"/>
</dbReference>
<dbReference type="SUPFAM" id="SSF75615">
    <property type="entry name" value="Siroheme synthase middle domains-like"/>
    <property type="match status" value="1"/>
</dbReference>
<dbReference type="SUPFAM" id="SSF53790">
    <property type="entry name" value="Tetrapyrrole methylase"/>
    <property type="match status" value="1"/>
</dbReference>
<dbReference type="PROSITE" id="PS00839">
    <property type="entry name" value="SUMT_1"/>
    <property type="match status" value="1"/>
</dbReference>
<dbReference type="PROSITE" id="PS00840">
    <property type="entry name" value="SUMT_2"/>
    <property type="match status" value="1"/>
</dbReference>
<gene>
    <name evidence="1" type="primary">cysG</name>
    <name type="ordered locus">ECDH10B_3544</name>
</gene>
<comment type="function">
    <text evidence="1">Multifunctional enzyme that catalyzes the SAM-dependent methylations of uroporphyrinogen III at position C-2 and C-7 to form precorrin-2 via precorrin-1. Then it catalyzes the NAD-dependent ring dehydrogenation of precorrin-2 to yield sirohydrochlorin. Finally, it catalyzes the ferrochelation of sirohydrochlorin to yield siroheme.</text>
</comment>
<comment type="catalytic activity">
    <reaction evidence="1">
        <text>uroporphyrinogen III + 2 S-adenosyl-L-methionine = precorrin-2 + 2 S-adenosyl-L-homocysteine + H(+)</text>
        <dbReference type="Rhea" id="RHEA:32459"/>
        <dbReference type="ChEBI" id="CHEBI:15378"/>
        <dbReference type="ChEBI" id="CHEBI:57308"/>
        <dbReference type="ChEBI" id="CHEBI:57856"/>
        <dbReference type="ChEBI" id="CHEBI:58827"/>
        <dbReference type="ChEBI" id="CHEBI:59789"/>
        <dbReference type="EC" id="2.1.1.107"/>
    </reaction>
</comment>
<comment type="catalytic activity">
    <reaction evidence="1">
        <text>precorrin-2 + NAD(+) = sirohydrochlorin + NADH + 2 H(+)</text>
        <dbReference type="Rhea" id="RHEA:15613"/>
        <dbReference type="ChEBI" id="CHEBI:15378"/>
        <dbReference type="ChEBI" id="CHEBI:57540"/>
        <dbReference type="ChEBI" id="CHEBI:57945"/>
        <dbReference type="ChEBI" id="CHEBI:58351"/>
        <dbReference type="ChEBI" id="CHEBI:58827"/>
        <dbReference type="EC" id="1.3.1.76"/>
    </reaction>
</comment>
<comment type="catalytic activity">
    <reaction evidence="1">
        <text>siroheme + 2 H(+) = sirohydrochlorin + Fe(2+)</text>
        <dbReference type="Rhea" id="RHEA:24360"/>
        <dbReference type="ChEBI" id="CHEBI:15378"/>
        <dbReference type="ChEBI" id="CHEBI:29033"/>
        <dbReference type="ChEBI" id="CHEBI:58351"/>
        <dbReference type="ChEBI" id="CHEBI:60052"/>
        <dbReference type="EC" id="4.99.1.4"/>
    </reaction>
</comment>
<comment type="pathway">
    <text evidence="1">Cofactor biosynthesis; adenosylcobalamin biosynthesis; precorrin-2 from uroporphyrinogen III: step 1/1.</text>
</comment>
<comment type="pathway">
    <text evidence="1">Cofactor biosynthesis; adenosylcobalamin biosynthesis; sirohydrochlorin from precorrin-2: step 1/1.</text>
</comment>
<comment type="pathway">
    <text evidence="1">Porphyrin-containing compound metabolism; siroheme biosynthesis; precorrin-2 from uroporphyrinogen III: step 1/1.</text>
</comment>
<comment type="pathway">
    <text evidence="1">Porphyrin-containing compound metabolism; siroheme biosynthesis; siroheme from sirohydrochlorin: step 1/1.</text>
</comment>
<comment type="pathway">
    <text evidence="1">Porphyrin-containing compound metabolism; siroheme biosynthesis; sirohydrochlorin from precorrin-2: step 1/1.</text>
</comment>
<comment type="similarity">
    <text evidence="1">In the N-terminal section; belongs to the precorrin-2 dehydrogenase / sirohydrochlorin ferrochelatase family.</text>
</comment>
<comment type="similarity">
    <text evidence="1">In the C-terminal section; belongs to the precorrin methyltransferase family.</text>
</comment>
<keyword id="KW-0169">Cobalamin biosynthesis</keyword>
<keyword id="KW-0456">Lyase</keyword>
<keyword id="KW-0489">Methyltransferase</keyword>
<keyword id="KW-0511">Multifunctional enzyme</keyword>
<keyword id="KW-0520">NAD</keyword>
<keyword id="KW-0560">Oxidoreductase</keyword>
<keyword id="KW-0597">Phosphoprotein</keyword>
<keyword id="KW-0627">Porphyrin biosynthesis</keyword>
<keyword id="KW-0949">S-adenosyl-L-methionine</keyword>
<keyword id="KW-0808">Transferase</keyword>
<accession>B1X716</accession>
<feature type="chain" id="PRO_1000186943" description="Siroheme synthase">
    <location>
        <begin position="1"/>
        <end position="457"/>
    </location>
</feature>
<feature type="region of interest" description="Precorrin-2 dehydrogenase /sirohydrochlorin ferrochelatase" evidence="1">
    <location>
        <begin position="1"/>
        <end position="204"/>
    </location>
</feature>
<feature type="region of interest" description="Uroporphyrinogen-III C-methyltransferase" evidence="1">
    <location>
        <begin position="216"/>
        <end position="457"/>
    </location>
</feature>
<feature type="active site" description="Proton acceptor" evidence="1">
    <location>
        <position position="248"/>
    </location>
</feature>
<feature type="active site" description="Proton donor" evidence="1">
    <location>
        <position position="270"/>
    </location>
</feature>
<feature type="binding site" evidence="1">
    <location>
        <begin position="22"/>
        <end position="23"/>
    </location>
    <ligand>
        <name>NAD(+)</name>
        <dbReference type="ChEBI" id="CHEBI:57540"/>
    </ligand>
</feature>
<feature type="binding site" evidence="1">
    <location>
        <begin position="43"/>
        <end position="44"/>
    </location>
    <ligand>
        <name>NAD(+)</name>
        <dbReference type="ChEBI" id="CHEBI:57540"/>
    </ligand>
</feature>
<feature type="binding site" evidence="1">
    <location>
        <position position="225"/>
    </location>
    <ligand>
        <name>S-adenosyl-L-methionine</name>
        <dbReference type="ChEBI" id="CHEBI:59789"/>
    </ligand>
</feature>
<feature type="binding site" evidence="1">
    <location>
        <begin position="301"/>
        <end position="303"/>
    </location>
    <ligand>
        <name>S-adenosyl-L-methionine</name>
        <dbReference type="ChEBI" id="CHEBI:59789"/>
    </ligand>
</feature>
<feature type="binding site" evidence="1">
    <location>
        <position position="306"/>
    </location>
    <ligand>
        <name>S-adenosyl-L-methionine</name>
        <dbReference type="ChEBI" id="CHEBI:59789"/>
    </ligand>
</feature>
<feature type="binding site" evidence="1">
    <location>
        <begin position="331"/>
        <end position="332"/>
    </location>
    <ligand>
        <name>S-adenosyl-L-methionine</name>
        <dbReference type="ChEBI" id="CHEBI:59789"/>
    </ligand>
</feature>
<feature type="binding site" evidence="1">
    <location>
        <position position="382"/>
    </location>
    <ligand>
        <name>S-adenosyl-L-methionine</name>
        <dbReference type="ChEBI" id="CHEBI:59789"/>
    </ligand>
</feature>
<feature type="binding site" evidence="1">
    <location>
        <position position="411"/>
    </location>
    <ligand>
        <name>S-adenosyl-L-methionine</name>
        <dbReference type="ChEBI" id="CHEBI:59789"/>
    </ligand>
</feature>
<feature type="modified residue" description="Phosphoserine" evidence="1">
    <location>
        <position position="128"/>
    </location>
</feature>
<proteinExistence type="inferred from homology"/>